<gene>
    <name evidence="2" type="primary">rpsL</name>
    <name type="ordered locus">BTH_I3073</name>
</gene>
<organism>
    <name type="scientific">Burkholderia thailandensis (strain ATCC 700388 / DSM 13276 / CCUG 48851 / CIP 106301 / E264)</name>
    <dbReference type="NCBI Taxonomy" id="271848"/>
    <lineage>
        <taxon>Bacteria</taxon>
        <taxon>Pseudomonadati</taxon>
        <taxon>Pseudomonadota</taxon>
        <taxon>Betaproteobacteria</taxon>
        <taxon>Burkholderiales</taxon>
        <taxon>Burkholderiaceae</taxon>
        <taxon>Burkholderia</taxon>
        <taxon>pseudomallei group</taxon>
    </lineage>
</organism>
<protein>
    <recommendedName>
        <fullName evidence="2">Small ribosomal subunit protein uS12</fullName>
    </recommendedName>
    <alternativeName>
        <fullName evidence="4">30S ribosomal protein S12</fullName>
    </alternativeName>
</protein>
<comment type="function">
    <text evidence="2">With S4 and S5 plays an important role in translational accuracy.</text>
</comment>
<comment type="function">
    <text evidence="2">Interacts with and stabilizes bases of the 16S rRNA that are involved in tRNA selection in the A site and with the mRNA backbone. Located at the interface of the 30S and 50S subunits, it traverses the body of the 30S subunit contacting proteins on the other side and probably holding the rRNA structure together. The combined cluster of proteins S8, S12 and S17 appears to hold together the shoulder and platform of the 30S subunit.</text>
</comment>
<comment type="subunit">
    <text evidence="2">Part of the 30S ribosomal subunit. Contacts proteins S8 and S17. May interact with IF1 in the 30S initiation complex.</text>
</comment>
<comment type="similarity">
    <text evidence="2">Belongs to the universal ribosomal protein uS12 family.</text>
</comment>
<evidence type="ECO:0000250" key="1"/>
<evidence type="ECO:0000255" key="2">
    <source>
        <dbReference type="HAMAP-Rule" id="MF_00403"/>
    </source>
</evidence>
<evidence type="ECO:0000256" key="3">
    <source>
        <dbReference type="SAM" id="MobiDB-lite"/>
    </source>
</evidence>
<evidence type="ECO:0000305" key="4"/>
<dbReference type="EMBL" id="CP000086">
    <property type="protein sequence ID" value="ABC37727.1"/>
    <property type="molecule type" value="Genomic_DNA"/>
</dbReference>
<dbReference type="RefSeq" id="WP_004521903.1">
    <property type="nucleotide sequence ID" value="NZ_CP008786.1"/>
</dbReference>
<dbReference type="SMR" id="Q2SU22"/>
<dbReference type="GeneID" id="93061837"/>
<dbReference type="KEGG" id="bte:BTH_I3073"/>
<dbReference type="HOGENOM" id="CLU_104295_1_2_4"/>
<dbReference type="Proteomes" id="UP000001930">
    <property type="component" value="Chromosome I"/>
</dbReference>
<dbReference type="GO" id="GO:0015935">
    <property type="term" value="C:small ribosomal subunit"/>
    <property type="evidence" value="ECO:0007669"/>
    <property type="project" value="InterPro"/>
</dbReference>
<dbReference type="GO" id="GO:0019843">
    <property type="term" value="F:rRNA binding"/>
    <property type="evidence" value="ECO:0007669"/>
    <property type="project" value="UniProtKB-UniRule"/>
</dbReference>
<dbReference type="GO" id="GO:0003735">
    <property type="term" value="F:structural constituent of ribosome"/>
    <property type="evidence" value="ECO:0007669"/>
    <property type="project" value="InterPro"/>
</dbReference>
<dbReference type="GO" id="GO:0000049">
    <property type="term" value="F:tRNA binding"/>
    <property type="evidence" value="ECO:0007669"/>
    <property type="project" value="UniProtKB-UniRule"/>
</dbReference>
<dbReference type="GO" id="GO:0006412">
    <property type="term" value="P:translation"/>
    <property type="evidence" value="ECO:0007669"/>
    <property type="project" value="UniProtKB-UniRule"/>
</dbReference>
<dbReference type="CDD" id="cd03368">
    <property type="entry name" value="Ribosomal_S12"/>
    <property type="match status" value="1"/>
</dbReference>
<dbReference type="FunFam" id="2.40.50.140:FF:000001">
    <property type="entry name" value="30S ribosomal protein S12"/>
    <property type="match status" value="1"/>
</dbReference>
<dbReference type="Gene3D" id="2.40.50.140">
    <property type="entry name" value="Nucleic acid-binding proteins"/>
    <property type="match status" value="1"/>
</dbReference>
<dbReference type="HAMAP" id="MF_00403_B">
    <property type="entry name" value="Ribosomal_uS12_B"/>
    <property type="match status" value="1"/>
</dbReference>
<dbReference type="InterPro" id="IPR012340">
    <property type="entry name" value="NA-bd_OB-fold"/>
</dbReference>
<dbReference type="InterPro" id="IPR006032">
    <property type="entry name" value="Ribosomal_uS12"/>
</dbReference>
<dbReference type="InterPro" id="IPR005679">
    <property type="entry name" value="Ribosomal_uS12_bac"/>
</dbReference>
<dbReference type="NCBIfam" id="TIGR00981">
    <property type="entry name" value="rpsL_bact"/>
    <property type="match status" value="1"/>
</dbReference>
<dbReference type="PANTHER" id="PTHR11652">
    <property type="entry name" value="30S RIBOSOMAL PROTEIN S12 FAMILY MEMBER"/>
    <property type="match status" value="1"/>
</dbReference>
<dbReference type="Pfam" id="PF00164">
    <property type="entry name" value="Ribosom_S12_S23"/>
    <property type="match status" value="1"/>
</dbReference>
<dbReference type="PIRSF" id="PIRSF002133">
    <property type="entry name" value="Ribosomal_S12/S23"/>
    <property type="match status" value="1"/>
</dbReference>
<dbReference type="PRINTS" id="PR01034">
    <property type="entry name" value="RIBOSOMALS12"/>
</dbReference>
<dbReference type="SUPFAM" id="SSF50249">
    <property type="entry name" value="Nucleic acid-binding proteins"/>
    <property type="match status" value="1"/>
</dbReference>
<dbReference type="PROSITE" id="PS00055">
    <property type="entry name" value="RIBOSOMAL_S12"/>
    <property type="match status" value="1"/>
</dbReference>
<reference key="1">
    <citation type="journal article" date="2005" name="BMC Genomics">
        <title>Bacterial genome adaptation to niches: divergence of the potential virulence genes in three Burkholderia species of different survival strategies.</title>
        <authorList>
            <person name="Kim H.S."/>
            <person name="Schell M.A."/>
            <person name="Yu Y."/>
            <person name="Ulrich R.L."/>
            <person name="Sarria S.H."/>
            <person name="Nierman W.C."/>
            <person name="DeShazer D."/>
        </authorList>
    </citation>
    <scope>NUCLEOTIDE SEQUENCE [LARGE SCALE GENOMIC DNA]</scope>
    <source>
        <strain>ATCC 700388 / DSM 13276 / CCUG 48851 / CIP 106301 / E264</strain>
    </source>
</reference>
<accession>Q2SU22</accession>
<proteinExistence type="inferred from homology"/>
<keyword id="KW-0488">Methylation</keyword>
<keyword id="KW-0687">Ribonucleoprotein</keyword>
<keyword id="KW-0689">Ribosomal protein</keyword>
<keyword id="KW-0694">RNA-binding</keyword>
<keyword id="KW-0699">rRNA-binding</keyword>
<keyword id="KW-0820">tRNA-binding</keyword>
<name>RS12_BURTA</name>
<feature type="chain" id="PRO_0000238129" description="Small ribosomal subunit protein uS12">
    <location>
        <begin position="1"/>
        <end position="126"/>
    </location>
</feature>
<feature type="region of interest" description="Disordered" evidence="3">
    <location>
        <begin position="1"/>
        <end position="26"/>
    </location>
</feature>
<feature type="region of interest" description="Disordered" evidence="3">
    <location>
        <begin position="101"/>
        <end position="126"/>
    </location>
</feature>
<feature type="compositionally biased region" description="Basic residues" evidence="3">
    <location>
        <begin position="113"/>
        <end position="126"/>
    </location>
</feature>
<feature type="modified residue" description="3-methylthioaspartic acid" evidence="1">
    <location>
        <position position="89"/>
    </location>
</feature>
<sequence>MPTINQLVRKGRASETTKSKSPALQDCPQRRGVCTRVYTTTPKKPNSALRKVAKVRLTNGFEVISYIGGEGHNLQEHSVVLIRGGRVKDLPGVRYHMVRGSLDTQGVKDRKQARSKYGAKRAKAAK</sequence>